<accession>P0DPF1</accession>
<accession>A0A2H4A2Y1</accession>
<evidence type="ECO:0000255" key="1">
    <source>
        <dbReference type="PROSITE-ProRule" id="PRU01005"/>
    </source>
</evidence>
<evidence type="ECO:0000269" key="2">
    <source>
    </source>
</evidence>
<evidence type="ECO:0000303" key="3">
    <source>
    </source>
</evidence>
<evidence type="ECO:0000305" key="4"/>
<evidence type="ECO:0000305" key="5">
    <source>
    </source>
</evidence>
<evidence type="ECO:0000312" key="6">
    <source>
        <dbReference type="PDB" id="5WCV"/>
    </source>
</evidence>
<evidence type="ECO:0007829" key="7">
    <source>
        <dbReference type="PDB" id="5WCV"/>
    </source>
</evidence>
<dbReference type="PDB" id="5WCV">
    <property type="method" value="NMR"/>
    <property type="chains" value="A=1-29"/>
</dbReference>
<dbReference type="PDBsum" id="5WCV"/>
<dbReference type="SMR" id="P0DPF1"/>
<dbReference type="GO" id="GO:0005576">
    <property type="term" value="C:extracellular region"/>
    <property type="evidence" value="ECO:0007669"/>
    <property type="project" value="UniProtKB-SubCell"/>
</dbReference>
<dbReference type="GO" id="GO:0042151">
    <property type="term" value="C:nematocyst"/>
    <property type="evidence" value="ECO:0007669"/>
    <property type="project" value="UniProtKB-SubCell"/>
</dbReference>
<proteinExistence type="evidence at protein level"/>
<keyword id="KW-0002">3D-structure</keyword>
<keyword id="KW-1015">Disulfide bond</keyword>
<keyword id="KW-0166">Nematocyst</keyword>
<keyword id="KW-0964">Secreted</keyword>
<organism>
    <name type="scientific">Anemonia sulcata</name>
    <name type="common">Mediterranean snakelocks sea anemone</name>
    <dbReference type="NCBI Taxonomy" id="6108"/>
    <lineage>
        <taxon>Eukaryota</taxon>
        <taxon>Metazoa</taxon>
        <taxon>Cnidaria</taxon>
        <taxon>Anthozoa</taxon>
        <taxon>Hexacorallia</taxon>
        <taxon>Actiniaria</taxon>
        <taxon>Actiniidae</taxon>
        <taxon>Anemonia</taxon>
    </lineage>
</organism>
<feature type="peptide" id="PRO_0000443530" description="ShK homolog Ask132958" evidence="5">
    <location>
        <begin position="1"/>
        <end position="29"/>
    </location>
</feature>
<feature type="domain" description="ShKT" evidence="1">
    <location>
        <begin position="1"/>
        <end position="29"/>
    </location>
</feature>
<feature type="disulfide bond" evidence="2 6">
    <location>
        <begin position="1"/>
        <end position="29"/>
    </location>
</feature>
<feature type="disulfide bond" evidence="2 6">
    <location>
        <begin position="8"/>
        <end position="22"/>
    </location>
</feature>
<feature type="disulfide bond" evidence="2 6">
    <location>
        <begin position="13"/>
        <end position="26"/>
    </location>
</feature>
<feature type="mutagenesis site" description="No gain of activity on Kv channels." evidence="2">
    <original>T</original>
    <variation>Y</variation>
    <location>
        <position position="16"/>
    </location>
</feature>
<feature type="mutagenesis site" description="No gain of activity on Kv channels." evidence="2">
    <original>Q</original>
    <variation>Y</variation>
    <location>
        <position position="20"/>
    </location>
</feature>
<feature type="mutagenesis site" description="No gain of activity on Kv channels." evidence="2">
    <original>L</original>
    <variation>Y</variation>
    <location>
        <position position="28"/>
    </location>
</feature>
<feature type="strand" evidence="7">
    <location>
        <begin position="4"/>
        <end position="7"/>
    </location>
</feature>
<feature type="helix" evidence="7">
    <location>
        <begin position="10"/>
        <end position="14"/>
    </location>
</feature>
<feature type="turn" evidence="7">
    <location>
        <begin position="16"/>
        <end position="21"/>
    </location>
</feature>
<feature type="turn" evidence="7">
    <location>
        <begin position="24"/>
        <end position="27"/>
    </location>
</feature>
<sequence length="29" mass="3130">CENTISGCSRADCLLTHRKQGCQKTCGLC</sequence>
<comment type="function">
    <text evidence="2">This peptide is similar to the potassium channel toxin ShK, but does not show activity on potassium channels. It appears that Lys-19, which is expected to occupy the pore of the channel, is not sufficiently accessible for binding, and therefore that this peptide must have a distinct functional role that does not involve potassium channels. It is noteworthy that this peptide is much more stable in the presence of trypsin, chymotrypsin and pepsin than the toxin ShK.</text>
</comment>
<comment type="subcellular location">
    <subcellularLocation>
        <location evidence="5">Secreted</location>
    </subcellularLocation>
    <subcellularLocation>
        <location evidence="4">Nematocyst</location>
    </subcellularLocation>
</comment>
<comment type="miscellaneous">
    <text evidence="2">Does not show activity against grass shrimp (Palaemonetes sp.) and brine shrimp (A.nauplii). Does not show activity on the voltage-gated potassium channels tested (rKv1.1/KCNA1, rKv1.2/KCNA2, hKv1.3/KCNA3, rKv1.4/KCNA4, rKv1.5/KCNA5, rKv1.6/KCNA6, Shaker IR/Sh, rKv4.2/KCND2, Kv11.1/KCNH2/ERG1, hKv10.1/KCNH1/EAG1).</text>
</comment>
<comment type="similarity">
    <text evidence="4">Belongs to the sea anemone type 1 potassium channel toxin family. Type 1a subfamily.</text>
</comment>
<comment type="online information" name="Biological Magnetic Resonance Data Bank">
    <link uri="https://bmrb.io/data_library/summary/index.php?bmrbId=30315"/>
</comment>
<name>K1HH_ANESU</name>
<reference evidence="6" key="1">
    <citation type="journal article" date="2018" name="Peptides">
        <title>Structure, folding and stability of a minimal homologue from Anemonia sulcata of the sea anemone potassium channel blocker ShK.</title>
        <authorList>
            <person name="Krishnarjuna B."/>
            <person name="MacRaild C.A."/>
            <person name="Sunanda P."/>
            <person name="Morales R.A.V."/>
            <person name="Peigneur S."/>
            <person name="Macrander J."/>
            <person name="Yu H.H."/>
            <person name="Daly M."/>
            <person name="Raghothama S."/>
            <person name="Dhawan V."/>
            <person name="Chauhan S."/>
            <person name="Tytgat J."/>
            <person name="Pennington M.W."/>
            <person name="Norton R.S."/>
        </authorList>
    </citation>
    <scope>NUCLEOTIDE SEQUENCE [MRNA]</scope>
    <scope>SYNTHESIS</scope>
    <scope>STRUCTURE BY NMR</scope>
    <scope>MUTAGENESIS OF THR-16; GLN-20 AND LEU-28</scope>
</reference>
<protein>
    <recommendedName>
        <fullName evidence="3">ShK homolog Ask132958</fullName>
    </recommendedName>
    <alternativeName>
        <fullName evidence="3">U-ASTX-Asu1</fullName>
    </alternativeName>
</protein>